<name>TPIS_SHEAM</name>
<dbReference type="EC" id="5.3.1.1" evidence="1"/>
<dbReference type="EMBL" id="CP000507">
    <property type="protein sequence ID" value="ABL99164.1"/>
    <property type="molecule type" value="Genomic_DNA"/>
</dbReference>
<dbReference type="RefSeq" id="WP_011759073.1">
    <property type="nucleotide sequence ID" value="NC_008700.1"/>
</dbReference>
<dbReference type="SMR" id="A1S458"/>
<dbReference type="STRING" id="326297.Sama_0957"/>
<dbReference type="KEGG" id="saz:Sama_0957"/>
<dbReference type="eggNOG" id="COG0149">
    <property type="taxonomic scope" value="Bacteria"/>
</dbReference>
<dbReference type="HOGENOM" id="CLU_024251_2_1_6"/>
<dbReference type="OrthoDB" id="9809429at2"/>
<dbReference type="UniPathway" id="UPA00109">
    <property type="reaction ID" value="UER00189"/>
</dbReference>
<dbReference type="UniPathway" id="UPA00138"/>
<dbReference type="Proteomes" id="UP000009175">
    <property type="component" value="Chromosome"/>
</dbReference>
<dbReference type="GO" id="GO:0005829">
    <property type="term" value="C:cytosol"/>
    <property type="evidence" value="ECO:0007669"/>
    <property type="project" value="TreeGrafter"/>
</dbReference>
<dbReference type="GO" id="GO:0004807">
    <property type="term" value="F:triose-phosphate isomerase activity"/>
    <property type="evidence" value="ECO:0007669"/>
    <property type="project" value="UniProtKB-UniRule"/>
</dbReference>
<dbReference type="GO" id="GO:0006094">
    <property type="term" value="P:gluconeogenesis"/>
    <property type="evidence" value="ECO:0007669"/>
    <property type="project" value="UniProtKB-UniRule"/>
</dbReference>
<dbReference type="GO" id="GO:0046166">
    <property type="term" value="P:glyceraldehyde-3-phosphate biosynthetic process"/>
    <property type="evidence" value="ECO:0007669"/>
    <property type="project" value="TreeGrafter"/>
</dbReference>
<dbReference type="GO" id="GO:0019563">
    <property type="term" value="P:glycerol catabolic process"/>
    <property type="evidence" value="ECO:0007669"/>
    <property type="project" value="TreeGrafter"/>
</dbReference>
<dbReference type="GO" id="GO:0006096">
    <property type="term" value="P:glycolytic process"/>
    <property type="evidence" value="ECO:0007669"/>
    <property type="project" value="UniProtKB-UniRule"/>
</dbReference>
<dbReference type="CDD" id="cd00311">
    <property type="entry name" value="TIM"/>
    <property type="match status" value="1"/>
</dbReference>
<dbReference type="FunFam" id="3.20.20.70:FF:000016">
    <property type="entry name" value="Triosephosphate isomerase"/>
    <property type="match status" value="1"/>
</dbReference>
<dbReference type="Gene3D" id="3.20.20.70">
    <property type="entry name" value="Aldolase class I"/>
    <property type="match status" value="1"/>
</dbReference>
<dbReference type="HAMAP" id="MF_00147_B">
    <property type="entry name" value="TIM_B"/>
    <property type="match status" value="1"/>
</dbReference>
<dbReference type="InterPro" id="IPR013785">
    <property type="entry name" value="Aldolase_TIM"/>
</dbReference>
<dbReference type="InterPro" id="IPR035990">
    <property type="entry name" value="TIM_sf"/>
</dbReference>
<dbReference type="InterPro" id="IPR022896">
    <property type="entry name" value="TrioseP_Isoase_bac/euk"/>
</dbReference>
<dbReference type="InterPro" id="IPR000652">
    <property type="entry name" value="Triosephosphate_isomerase"/>
</dbReference>
<dbReference type="InterPro" id="IPR020861">
    <property type="entry name" value="Triosephosphate_isomerase_AS"/>
</dbReference>
<dbReference type="NCBIfam" id="TIGR00419">
    <property type="entry name" value="tim"/>
    <property type="match status" value="1"/>
</dbReference>
<dbReference type="PANTHER" id="PTHR21139">
    <property type="entry name" value="TRIOSEPHOSPHATE ISOMERASE"/>
    <property type="match status" value="1"/>
</dbReference>
<dbReference type="PANTHER" id="PTHR21139:SF42">
    <property type="entry name" value="TRIOSEPHOSPHATE ISOMERASE"/>
    <property type="match status" value="1"/>
</dbReference>
<dbReference type="Pfam" id="PF00121">
    <property type="entry name" value="TIM"/>
    <property type="match status" value="1"/>
</dbReference>
<dbReference type="SUPFAM" id="SSF51351">
    <property type="entry name" value="Triosephosphate isomerase (TIM)"/>
    <property type="match status" value="1"/>
</dbReference>
<dbReference type="PROSITE" id="PS00171">
    <property type="entry name" value="TIM_1"/>
    <property type="match status" value="1"/>
</dbReference>
<dbReference type="PROSITE" id="PS51440">
    <property type="entry name" value="TIM_2"/>
    <property type="match status" value="1"/>
</dbReference>
<keyword id="KW-0963">Cytoplasm</keyword>
<keyword id="KW-0312">Gluconeogenesis</keyword>
<keyword id="KW-0324">Glycolysis</keyword>
<keyword id="KW-0413">Isomerase</keyword>
<keyword id="KW-1185">Reference proteome</keyword>
<organism>
    <name type="scientific">Shewanella amazonensis (strain ATCC BAA-1098 / SB2B)</name>
    <dbReference type="NCBI Taxonomy" id="326297"/>
    <lineage>
        <taxon>Bacteria</taxon>
        <taxon>Pseudomonadati</taxon>
        <taxon>Pseudomonadota</taxon>
        <taxon>Gammaproteobacteria</taxon>
        <taxon>Alteromonadales</taxon>
        <taxon>Shewanellaceae</taxon>
        <taxon>Shewanella</taxon>
    </lineage>
</organism>
<protein>
    <recommendedName>
        <fullName evidence="1">Triosephosphate isomerase</fullName>
        <shortName evidence="1">TIM</shortName>
        <shortName evidence="1">TPI</shortName>
        <ecNumber evidence="1">5.3.1.1</ecNumber>
    </recommendedName>
    <alternativeName>
        <fullName evidence="1">Triose-phosphate isomerase</fullName>
    </alternativeName>
</protein>
<feature type="chain" id="PRO_0000307552" description="Triosephosphate isomerase">
    <location>
        <begin position="1"/>
        <end position="260"/>
    </location>
</feature>
<feature type="active site" description="Electrophile" evidence="1">
    <location>
        <position position="103"/>
    </location>
</feature>
<feature type="active site" description="Proton acceptor" evidence="1">
    <location>
        <position position="175"/>
    </location>
</feature>
<feature type="binding site" evidence="1">
    <location>
        <begin position="11"/>
        <end position="13"/>
    </location>
    <ligand>
        <name>substrate</name>
    </ligand>
</feature>
<feature type="binding site" evidence="1">
    <location>
        <position position="181"/>
    </location>
    <ligand>
        <name>substrate</name>
    </ligand>
</feature>
<feature type="binding site" evidence="1">
    <location>
        <position position="220"/>
    </location>
    <ligand>
        <name>substrate</name>
    </ligand>
</feature>
<feature type="binding site" evidence="1">
    <location>
        <begin position="241"/>
        <end position="242"/>
    </location>
    <ligand>
        <name>substrate</name>
    </ligand>
</feature>
<comment type="function">
    <text evidence="1">Involved in the gluconeogenesis. Catalyzes stereospecifically the conversion of dihydroxyacetone phosphate (DHAP) to D-glyceraldehyde-3-phosphate (G3P).</text>
</comment>
<comment type="catalytic activity">
    <reaction evidence="1">
        <text>D-glyceraldehyde 3-phosphate = dihydroxyacetone phosphate</text>
        <dbReference type="Rhea" id="RHEA:18585"/>
        <dbReference type="ChEBI" id="CHEBI:57642"/>
        <dbReference type="ChEBI" id="CHEBI:59776"/>
        <dbReference type="EC" id="5.3.1.1"/>
    </reaction>
</comment>
<comment type="pathway">
    <text evidence="1">Carbohydrate biosynthesis; gluconeogenesis.</text>
</comment>
<comment type="pathway">
    <text evidence="1">Carbohydrate degradation; glycolysis; D-glyceraldehyde 3-phosphate from glycerone phosphate: step 1/1.</text>
</comment>
<comment type="subunit">
    <text evidence="1">Homodimer.</text>
</comment>
<comment type="subcellular location">
    <subcellularLocation>
        <location evidence="1">Cytoplasm</location>
    </subcellularLocation>
</comment>
<comment type="similarity">
    <text evidence="1">Belongs to the triosephosphate isomerase family.</text>
</comment>
<reference key="1">
    <citation type="submission" date="2006-12" db="EMBL/GenBank/DDBJ databases">
        <title>Complete sequence of Shewanella amazonensis SB2B.</title>
        <authorList>
            <consortium name="US DOE Joint Genome Institute"/>
            <person name="Copeland A."/>
            <person name="Lucas S."/>
            <person name="Lapidus A."/>
            <person name="Barry K."/>
            <person name="Detter J.C."/>
            <person name="Glavina del Rio T."/>
            <person name="Hammon N."/>
            <person name="Israni S."/>
            <person name="Dalin E."/>
            <person name="Tice H."/>
            <person name="Pitluck S."/>
            <person name="Munk A.C."/>
            <person name="Brettin T."/>
            <person name="Bruce D."/>
            <person name="Han C."/>
            <person name="Tapia R."/>
            <person name="Gilna P."/>
            <person name="Schmutz J."/>
            <person name="Larimer F."/>
            <person name="Land M."/>
            <person name="Hauser L."/>
            <person name="Kyrpides N."/>
            <person name="Mikhailova N."/>
            <person name="Fredrickson J."/>
            <person name="Richardson P."/>
        </authorList>
    </citation>
    <scope>NUCLEOTIDE SEQUENCE [LARGE SCALE GENOMIC DNA]</scope>
    <source>
        <strain>ATCC BAA-1098 / SB2B</strain>
    </source>
</reference>
<accession>A1S458</accession>
<gene>
    <name evidence="1" type="primary">tpiA</name>
    <name type="ordered locus">Sama_0957</name>
</gene>
<sequence>MALRRPMVAGNWKMNGSAALAQELFKKFAVKLQNDSAEVVLCPPTIYLESVRQLLEANKEALNGCLVRMGAQNLSQHDFGAYTGEISGQMLKDSGCRYVIVGHSERRRMYGETSDIVAEKFAAAQKHGLTPILCVGESGPAREARRTFEVIAEELDVVIEKNGTMAFDNAIIAYEPLWAVGTGKSATPEQAQEVHAFIRRRLSEVSPFIGENVRILYGGSVTPSNAADLFAQPDVDGGLIGGASLNSTEFLTLCSIAMSA</sequence>
<evidence type="ECO:0000255" key="1">
    <source>
        <dbReference type="HAMAP-Rule" id="MF_00147"/>
    </source>
</evidence>
<proteinExistence type="inferred from homology"/>